<dbReference type="EMBL" id="AY423389">
    <property type="protein sequence ID" value="AAR27884.1"/>
    <property type="molecule type" value="Genomic_DNA"/>
</dbReference>
<dbReference type="RefSeq" id="NP_001300778.1">
    <property type="nucleotide sequence ID" value="NM_001313849.1"/>
</dbReference>
<dbReference type="RefSeq" id="XP_038538695.1">
    <property type="nucleotide sequence ID" value="XM_038682767.1"/>
</dbReference>
<dbReference type="RefSeq" id="XP_848886.2">
    <property type="nucleotide sequence ID" value="XM_843793.3"/>
</dbReference>
<dbReference type="SMR" id="Q5WR07"/>
<dbReference type="FunCoup" id="Q5WR07">
    <property type="interactions" value="31"/>
</dbReference>
<dbReference type="STRING" id="9615.ENSCAFP00000000737"/>
<dbReference type="GlyCosmos" id="Q5WR07">
    <property type="glycosylation" value="1 site, No reported glycans"/>
</dbReference>
<dbReference type="PaxDb" id="9612-ENSCAFP00000000737"/>
<dbReference type="Ensembl" id="ENSCAFT00000000802.3">
    <property type="protein sequence ID" value="ENSCAFP00000000737.1"/>
    <property type="gene ID" value="ENSCAFG00000000515.3"/>
</dbReference>
<dbReference type="Ensembl" id="ENSCAFT00030009403.1">
    <property type="protein sequence ID" value="ENSCAFP00030008233.1"/>
    <property type="gene ID" value="ENSCAFG00030005134.1"/>
</dbReference>
<dbReference type="Ensembl" id="ENSCAFT00040017906.1">
    <property type="protein sequence ID" value="ENSCAFP00040015547.1"/>
    <property type="gene ID" value="ENSCAFG00040009649.1"/>
</dbReference>
<dbReference type="Ensembl" id="ENSCAFT00845018517.1">
    <property type="protein sequence ID" value="ENSCAFP00845014444.1"/>
    <property type="gene ID" value="ENSCAFG00845010521.1"/>
</dbReference>
<dbReference type="GeneID" id="607183"/>
<dbReference type="KEGG" id="cfa:607183"/>
<dbReference type="CTD" id="4049"/>
<dbReference type="VEuPathDB" id="HostDB:ENSCAFG00845010521"/>
<dbReference type="VGNC" id="VGNC:42852">
    <property type="gene designation" value="LTA"/>
</dbReference>
<dbReference type="eggNOG" id="ENOG502S956">
    <property type="taxonomic scope" value="Eukaryota"/>
</dbReference>
<dbReference type="GeneTree" id="ENSGT01060000248544"/>
<dbReference type="HOGENOM" id="CLU_070352_4_0_1"/>
<dbReference type="InParanoid" id="Q5WR07"/>
<dbReference type="OMA" id="RSACQNV"/>
<dbReference type="OrthoDB" id="9940698at2759"/>
<dbReference type="TreeFam" id="TF332169"/>
<dbReference type="Reactome" id="R-CFA-5668541">
    <property type="pathway name" value="TNFR2 non-canonical NF-kB pathway"/>
</dbReference>
<dbReference type="Reactome" id="R-CFA-5669034">
    <property type="pathway name" value="TNFs bind their physiological receptors"/>
</dbReference>
<dbReference type="Reactome" id="R-CFA-5676594">
    <property type="pathway name" value="TNF receptor superfamily (TNFSF) members mediating non-canonical NF-kB pathway"/>
</dbReference>
<dbReference type="Proteomes" id="UP000002254">
    <property type="component" value="Chromosome 12"/>
</dbReference>
<dbReference type="Proteomes" id="UP000694429">
    <property type="component" value="Chromosome 12"/>
</dbReference>
<dbReference type="Proteomes" id="UP000694542">
    <property type="component" value="Chromosome 12"/>
</dbReference>
<dbReference type="Proteomes" id="UP000805418">
    <property type="component" value="Chromosome 12"/>
</dbReference>
<dbReference type="Bgee" id="ENSCAFG00000000515">
    <property type="expression patterns" value="Expressed in lymph node and 11 other cell types or tissues"/>
</dbReference>
<dbReference type="GO" id="GO:0005615">
    <property type="term" value="C:extracellular space"/>
    <property type="evidence" value="ECO:0000318"/>
    <property type="project" value="GO_Central"/>
</dbReference>
<dbReference type="GO" id="GO:0016020">
    <property type="term" value="C:membrane"/>
    <property type="evidence" value="ECO:0007669"/>
    <property type="project" value="UniProtKB-SubCell"/>
</dbReference>
<dbReference type="GO" id="GO:0005125">
    <property type="term" value="F:cytokine activity"/>
    <property type="evidence" value="ECO:0000318"/>
    <property type="project" value="GO_Central"/>
</dbReference>
<dbReference type="GO" id="GO:0005164">
    <property type="term" value="F:tumor necrosis factor receptor binding"/>
    <property type="evidence" value="ECO:0007669"/>
    <property type="project" value="InterPro"/>
</dbReference>
<dbReference type="GO" id="GO:0007166">
    <property type="term" value="P:cell surface receptor signaling pathway"/>
    <property type="evidence" value="ECO:0000318"/>
    <property type="project" value="GO_Central"/>
</dbReference>
<dbReference type="GO" id="GO:0050830">
    <property type="term" value="P:defense response to Gram-positive bacterium"/>
    <property type="evidence" value="ECO:0007669"/>
    <property type="project" value="Ensembl"/>
</dbReference>
<dbReference type="GO" id="GO:0006959">
    <property type="term" value="P:humoral immune response"/>
    <property type="evidence" value="ECO:0007669"/>
    <property type="project" value="Ensembl"/>
</dbReference>
<dbReference type="GO" id="GO:0006955">
    <property type="term" value="P:immune response"/>
    <property type="evidence" value="ECO:0000318"/>
    <property type="project" value="GO_Central"/>
</dbReference>
<dbReference type="GO" id="GO:0048535">
    <property type="term" value="P:lymph node development"/>
    <property type="evidence" value="ECO:0007669"/>
    <property type="project" value="Ensembl"/>
</dbReference>
<dbReference type="GO" id="GO:0043123">
    <property type="term" value="P:positive regulation of canonical NF-kappaB signal transduction"/>
    <property type="evidence" value="ECO:0000318"/>
    <property type="project" value="GO_Central"/>
</dbReference>
<dbReference type="GO" id="GO:0002876">
    <property type="term" value="P:positive regulation of chronic inflammatory response to antigenic stimulus"/>
    <property type="evidence" value="ECO:0007669"/>
    <property type="project" value="Ensembl"/>
</dbReference>
<dbReference type="GO" id="GO:2001238">
    <property type="term" value="P:positive regulation of extrinsic apoptotic signaling pathway"/>
    <property type="evidence" value="ECO:0000318"/>
    <property type="project" value="GO_Central"/>
</dbReference>
<dbReference type="GO" id="GO:0002925">
    <property type="term" value="P:positive regulation of humoral immune response mediated by circulating immunoglobulin"/>
    <property type="evidence" value="ECO:0007669"/>
    <property type="project" value="Ensembl"/>
</dbReference>
<dbReference type="GO" id="GO:0032729">
    <property type="term" value="P:positive regulation of type II interferon production"/>
    <property type="evidence" value="ECO:0007669"/>
    <property type="project" value="Ensembl"/>
</dbReference>
<dbReference type="CDD" id="cd00184">
    <property type="entry name" value="TNF"/>
    <property type="match status" value="1"/>
</dbReference>
<dbReference type="FunFam" id="2.60.120.40:FF:000016">
    <property type="entry name" value="Tumor necrosis factor"/>
    <property type="match status" value="1"/>
</dbReference>
<dbReference type="Gene3D" id="2.60.120.40">
    <property type="match status" value="1"/>
</dbReference>
<dbReference type="InterPro" id="IPR006053">
    <property type="entry name" value="TNF"/>
</dbReference>
<dbReference type="InterPro" id="IPR002960">
    <property type="entry name" value="TNF_beta"/>
</dbReference>
<dbReference type="InterPro" id="IPR021184">
    <property type="entry name" value="TNF_CS"/>
</dbReference>
<dbReference type="InterPro" id="IPR006052">
    <property type="entry name" value="TNF_dom"/>
</dbReference>
<dbReference type="InterPro" id="IPR008983">
    <property type="entry name" value="Tumour_necrosis_fac-like_dom"/>
</dbReference>
<dbReference type="PANTHER" id="PTHR11471:SF31">
    <property type="entry name" value="LYMPHOTOXIN-ALPHA"/>
    <property type="match status" value="1"/>
</dbReference>
<dbReference type="PANTHER" id="PTHR11471">
    <property type="entry name" value="TUMOR NECROSIS FACTOR FAMILY MEMBER"/>
    <property type="match status" value="1"/>
</dbReference>
<dbReference type="Pfam" id="PF00229">
    <property type="entry name" value="TNF"/>
    <property type="match status" value="1"/>
</dbReference>
<dbReference type="PRINTS" id="PR01234">
    <property type="entry name" value="TNECROSISFCT"/>
</dbReference>
<dbReference type="PRINTS" id="PR01236">
    <property type="entry name" value="TNFBETA"/>
</dbReference>
<dbReference type="SMART" id="SM00207">
    <property type="entry name" value="TNF"/>
    <property type="match status" value="1"/>
</dbReference>
<dbReference type="SUPFAM" id="SSF49842">
    <property type="entry name" value="TNF-like"/>
    <property type="match status" value="1"/>
</dbReference>
<dbReference type="PROSITE" id="PS00251">
    <property type="entry name" value="THD_1"/>
    <property type="match status" value="1"/>
</dbReference>
<dbReference type="PROSITE" id="PS50049">
    <property type="entry name" value="THD_2"/>
    <property type="match status" value="1"/>
</dbReference>
<comment type="function">
    <text evidence="1 2">Cytokine that in its homotrimeric form binds to TNFRSF1A/TNFR1, TNFRSF1B/TNFBR and TNFRSF14/HVEM (By similarity). In its heterotrimeric form with LTB binds to TNFRSF3/LTBR. Lymphotoxin is produced by lymphocytes and is cytotoxic for a wide range of tumor cells in vitro and in vivo (By similarity).</text>
</comment>
<comment type="subunit">
    <text evidence="2">Homotrimer, and heterotrimer of either two LTB and one LTA subunits or (less prevalent) two LTA and one LTB subunits. Interacts with TNFRSF14.</text>
</comment>
<comment type="subcellular location">
    <subcellularLocation>
        <location evidence="1">Secreted</location>
    </subcellularLocation>
    <subcellularLocation>
        <location evidence="1">Membrane</location>
    </subcellularLocation>
    <text evidence="1">The homotrimer is secreted. The heterotrimer is membrane-associated.</text>
</comment>
<comment type="similarity">
    <text evidence="5">Belongs to the tumor necrosis factor family.</text>
</comment>
<sequence length="204" mass="22033">MTPPGRLYLLRVRSAPVLLLLGLLLGLPPGAQGFPGVGISPSAARTAYQHPQKHFIQGTLKPAAHLIGDPSIQNSLRWRANTDRAFLRHGFSLSNNSLLVPTSGLYFVYSQVVFSGEGCFPKATPTPLYLAHEVQLFSSQYPFHVPLLSAQKSVCPGPQGPWVRSVYQGAVFLLTQGDQLSTHTDGISHLLLSPSSVFFGAFAL</sequence>
<reference key="1">
    <citation type="submission" date="2003-09" db="EMBL/GenBank/DDBJ databases">
        <title>Gemomic map of a portion of the canine MHC class I histocompatibility complex.</title>
        <authorList>
            <person name="Wagner J.L."/>
            <person name="Palti Y."/>
            <person name="DiDario D.D."/>
        </authorList>
    </citation>
    <scope>NUCLEOTIDE SEQUENCE [GENOMIC DNA]</scope>
</reference>
<feature type="signal peptide" evidence="1">
    <location>
        <begin position="1"/>
        <end position="33"/>
    </location>
</feature>
<feature type="chain" id="PRO_0000034462" description="Lymphotoxin-alpha">
    <location>
        <begin position="34"/>
        <end position="204"/>
    </location>
</feature>
<feature type="domain" description="THD" evidence="4">
    <location>
        <begin position="62"/>
        <end position="204"/>
    </location>
</feature>
<feature type="glycosylation site" description="N-linked (GlcNAc...) asparagine" evidence="3">
    <location>
        <position position="95"/>
    </location>
</feature>
<feature type="disulfide bond" evidence="4">
    <location>
        <begin position="119"/>
        <end position="155"/>
    </location>
</feature>
<evidence type="ECO:0000250" key="1"/>
<evidence type="ECO:0000250" key="2">
    <source>
        <dbReference type="UniProtKB" id="P01374"/>
    </source>
</evidence>
<evidence type="ECO:0000255" key="3"/>
<evidence type="ECO:0000255" key="4">
    <source>
        <dbReference type="PROSITE-ProRule" id="PRU01387"/>
    </source>
</evidence>
<evidence type="ECO:0000305" key="5"/>
<organism>
    <name type="scientific">Canis lupus familiaris</name>
    <name type="common">Dog</name>
    <name type="synonym">Canis familiaris</name>
    <dbReference type="NCBI Taxonomy" id="9615"/>
    <lineage>
        <taxon>Eukaryota</taxon>
        <taxon>Metazoa</taxon>
        <taxon>Chordata</taxon>
        <taxon>Craniata</taxon>
        <taxon>Vertebrata</taxon>
        <taxon>Euteleostomi</taxon>
        <taxon>Mammalia</taxon>
        <taxon>Eutheria</taxon>
        <taxon>Laurasiatheria</taxon>
        <taxon>Carnivora</taxon>
        <taxon>Caniformia</taxon>
        <taxon>Canidae</taxon>
        <taxon>Canis</taxon>
    </lineage>
</organism>
<name>TNFB_CANLF</name>
<protein>
    <recommendedName>
        <fullName>Lymphotoxin-alpha</fullName>
        <shortName>LT-alpha</shortName>
    </recommendedName>
    <alternativeName>
        <fullName>TNF-beta</fullName>
    </alternativeName>
    <alternativeName>
        <fullName>Tumor necrosis factor ligand superfamily member 1</fullName>
    </alternativeName>
</protein>
<keyword id="KW-0202">Cytokine</keyword>
<keyword id="KW-1015">Disulfide bond</keyword>
<keyword id="KW-0325">Glycoprotein</keyword>
<keyword id="KW-0472">Membrane</keyword>
<keyword id="KW-1185">Reference proteome</keyword>
<keyword id="KW-0964">Secreted</keyword>
<keyword id="KW-0732">Signal</keyword>
<accession>Q5WR07</accession>
<proteinExistence type="inferred from homology"/>
<gene>
    <name type="primary">LTA</name>
    <name type="synonym">TNFB</name>
    <name type="synonym">TNFSF1</name>
</gene>